<name>CODY_GEOSW</name>
<gene>
    <name evidence="1" type="primary">codY</name>
    <name type="ordered locus">GWCH70_1107</name>
</gene>
<feature type="chain" id="PRO_1000212286" description="Global transcriptional regulator CodY">
    <location>
        <begin position="1"/>
        <end position="259"/>
    </location>
</feature>
<feature type="DNA-binding region" description="H-T-H motif" evidence="1">
    <location>
        <begin position="203"/>
        <end position="222"/>
    </location>
</feature>
<feature type="region of interest" description="GAF domain" evidence="1">
    <location>
        <begin position="1"/>
        <end position="155"/>
    </location>
</feature>
<feature type="modified residue" description="Phosphoserine" evidence="1">
    <location>
        <position position="215"/>
    </location>
</feature>
<reference key="1">
    <citation type="submission" date="2009-06" db="EMBL/GenBank/DDBJ databases">
        <title>Complete sequence of chromosome of Geopacillus sp. WCH70.</title>
        <authorList>
            <consortium name="US DOE Joint Genome Institute"/>
            <person name="Lucas S."/>
            <person name="Copeland A."/>
            <person name="Lapidus A."/>
            <person name="Glavina del Rio T."/>
            <person name="Dalin E."/>
            <person name="Tice H."/>
            <person name="Bruce D."/>
            <person name="Goodwin L."/>
            <person name="Pitluck S."/>
            <person name="Chertkov O."/>
            <person name="Brettin T."/>
            <person name="Detter J.C."/>
            <person name="Han C."/>
            <person name="Larimer F."/>
            <person name="Land M."/>
            <person name="Hauser L."/>
            <person name="Kyrpides N."/>
            <person name="Mikhailova N."/>
            <person name="Brumm P."/>
            <person name="Mead D.A."/>
            <person name="Richardson P."/>
        </authorList>
    </citation>
    <scope>NUCLEOTIDE SEQUENCE [LARGE SCALE GENOMIC DNA]</scope>
    <source>
        <strain>WCH70</strain>
    </source>
</reference>
<proteinExistence type="inferred from homology"/>
<accession>C5D8W0</accession>
<evidence type="ECO:0000255" key="1">
    <source>
        <dbReference type="HAMAP-Rule" id="MF_00621"/>
    </source>
</evidence>
<organism>
    <name type="scientific">Geobacillus sp. (strain WCH70)</name>
    <dbReference type="NCBI Taxonomy" id="471223"/>
    <lineage>
        <taxon>Bacteria</taxon>
        <taxon>Bacillati</taxon>
        <taxon>Bacillota</taxon>
        <taxon>Bacilli</taxon>
        <taxon>Bacillales</taxon>
        <taxon>Anoxybacillaceae</taxon>
        <taxon>Geobacillus</taxon>
    </lineage>
</organism>
<sequence>MNLLQKTRKINAMLQKAAGKPVNFKEMAETLCEVIEANVFVVSRRGKLLGFAIKQSIENERMKRMLEERQFPEEYTKKLFNITETSPNIDINSEYTAFPVENRDLFKTGLTTIVPINGGGERLGTLILSRLDREFNDDDLILAEYGATVVGMEILREKAEEIEEEARSKAVVQMAISSLSYSELEAIEHIFEELEGTEGLLVASKIADRVGITRSVIVNALRKLESAGVIESRSLGMKGTYIKVLNDKFLTELEKLKSS</sequence>
<protein>
    <recommendedName>
        <fullName evidence="1">Global transcriptional regulator CodY</fullName>
    </recommendedName>
</protein>
<keyword id="KW-0963">Cytoplasm</keyword>
<keyword id="KW-0238">DNA-binding</keyword>
<keyword id="KW-0597">Phosphoprotein</keyword>
<keyword id="KW-0678">Repressor</keyword>
<keyword id="KW-0804">Transcription</keyword>
<keyword id="KW-0805">Transcription regulation</keyword>
<dbReference type="EMBL" id="CP001638">
    <property type="protein sequence ID" value="ACS23967.1"/>
    <property type="molecule type" value="Genomic_DNA"/>
</dbReference>
<dbReference type="SMR" id="C5D8W0"/>
<dbReference type="STRING" id="471223.GWCH70_1107"/>
<dbReference type="KEGG" id="gwc:GWCH70_1107"/>
<dbReference type="eggNOG" id="COG4465">
    <property type="taxonomic scope" value="Bacteria"/>
</dbReference>
<dbReference type="HOGENOM" id="CLU_089581_0_0_9"/>
<dbReference type="OrthoDB" id="2056at2"/>
<dbReference type="GO" id="GO:0005737">
    <property type="term" value="C:cytoplasm"/>
    <property type="evidence" value="ECO:0007669"/>
    <property type="project" value="UniProtKB-SubCell"/>
</dbReference>
<dbReference type="GO" id="GO:0003677">
    <property type="term" value="F:DNA binding"/>
    <property type="evidence" value="ECO:0007669"/>
    <property type="project" value="UniProtKB-UniRule"/>
</dbReference>
<dbReference type="GO" id="GO:0003700">
    <property type="term" value="F:DNA-binding transcription factor activity"/>
    <property type="evidence" value="ECO:0007669"/>
    <property type="project" value="InterPro"/>
</dbReference>
<dbReference type="GO" id="GO:0005525">
    <property type="term" value="F:GTP binding"/>
    <property type="evidence" value="ECO:0007669"/>
    <property type="project" value="InterPro"/>
</dbReference>
<dbReference type="GO" id="GO:0045892">
    <property type="term" value="P:negative regulation of DNA-templated transcription"/>
    <property type="evidence" value="ECO:0007669"/>
    <property type="project" value="UniProtKB-UniRule"/>
</dbReference>
<dbReference type="FunFam" id="1.10.10.10:FF:000034">
    <property type="entry name" value="GTP-sensing transcriptional pleiotropic repressor CodY"/>
    <property type="match status" value="1"/>
</dbReference>
<dbReference type="FunFam" id="3.30.450.40:FF:000003">
    <property type="entry name" value="GTP-sensing transcriptional pleiotropic repressor CodY"/>
    <property type="match status" value="1"/>
</dbReference>
<dbReference type="Gene3D" id="3.30.450.40">
    <property type="match status" value="1"/>
</dbReference>
<dbReference type="Gene3D" id="1.10.10.10">
    <property type="entry name" value="Winged helix-like DNA-binding domain superfamily/Winged helix DNA-binding domain"/>
    <property type="match status" value="1"/>
</dbReference>
<dbReference type="HAMAP" id="MF_00621">
    <property type="entry name" value="HTH_type_CodY"/>
    <property type="match status" value="1"/>
</dbReference>
<dbReference type="InterPro" id="IPR014154">
    <property type="entry name" value="CodY"/>
</dbReference>
<dbReference type="InterPro" id="IPR029016">
    <property type="entry name" value="GAF-like_dom_sf"/>
</dbReference>
<dbReference type="InterPro" id="IPR013198">
    <property type="entry name" value="GTP_trans_reg_CodY_C"/>
</dbReference>
<dbReference type="InterPro" id="IPR010312">
    <property type="entry name" value="Transc_reg_CodY_N"/>
</dbReference>
<dbReference type="InterPro" id="IPR036388">
    <property type="entry name" value="WH-like_DNA-bd_sf"/>
</dbReference>
<dbReference type="InterPro" id="IPR036390">
    <property type="entry name" value="WH_DNA-bd_sf"/>
</dbReference>
<dbReference type="NCBIfam" id="TIGR02787">
    <property type="entry name" value="codY_Gpos"/>
    <property type="match status" value="1"/>
</dbReference>
<dbReference type="NCBIfam" id="NF003170">
    <property type="entry name" value="PRK04158.1"/>
    <property type="match status" value="1"/>
</dbReference>
<dbReference type="PANTHER" id="PTHR40062:SF1">
    <property type="entry name" value="GLOBAL TRANSCRIPTIONAL REGULATOR CODY"/>
    <property type="match status" value="1"/>
</dbReference>
<dbReference type="PANTHER" id="PTHR40062">
    <property type="entry name" value="GTP-SENSING TRANSCRIPTIONAL PLEIOTROPIC REPRESSOR CODY"/>
    <property type="match status" value="1"/>
</dbReference>
<dbReference type="Pfam" id="PF06018">
    <property type="entry name" value="CodY"/>
    <property type="match status" value="1"/>
</dbReference>
<dbReference type="Pfam" id="PF08222">
    <property type="entry name" value="HTH_CodY"/>
    <property type="match status" value="1"/>
</dbReference>
<dbReference type="PIRSF" id="PIRSF011572">
    <property type="entry name" value="GTP_sensing_CodY"/>
    <property type="match status" value="1"/>
</dbReference>
<dbReference type="SUPFAM" id="SSF46785">
    <property type="entry name" value="Winged helix' DNA-binding domain"/>
    <property type="match status" value="1"/>
</dbReference>
<comment type="function">
    <text evidence="1">DNA-binding global transcriptional regulator which is involved in the adaptive response to starvation and acts by directly or indirectly controlling the expression of numerous genes in response to nutrient availability. During rapid exponential growth, CodY is highly active and represses genes whose products allow adaptation to nutrient depletion.</text>
</comment>
<comment type="subcellular location">
    <subcellularLocation>
        <location evidence="1">Cytoplasm</location>
    </subcellularLocation>
</comment>
<comment type="similarity">
    <text evidence="1">Belongs to the CodY family.</text>
</comment>